<organism>
    <name type="scientific">Mycobacterium tuberculosis (strain CDC 1551 / Oshkosh)</name>
    <dbReference type="NCBI Taxonomy" id="83331"/>
    <lineage>
        <taxon>Bacteria</taxon>
        <taxon>Bacillati</taxon>
        <taxon>Actinomycetota</taxon>
        <taxon>Actinomycetes</taxon>
        <taxon>Mycobacteriales</taxon>
        <taxon>Mycobacteriaceae</taxon>
        <taxon>Mycobacterium</taxon>
        <taxon>Mycobacterium tuberculosis complex</taxon>
    </lineage>
</organism>
<dbReference type="EMBL" id="AE000516">
    <property type="protein sequence ID" value="AAK44549.1"/>
    <property type="molecule type" value="Genomic_DNA"/>
</dbReference>
<dbReference type="PIR" id="B70525">
    <property type="entry name" value="B70525"/>
</dbReference>
<dbReference type="RefSeq" id="WP_003401613.1">
    <property type="nucleotide sequence ID" value="NZ_KK341227.1"/>
</dbReference>
<dbReference type="KEGG" id="mtc:MT0327"/>
<dbReference type="PATRIC" id="fig|83331.31.peg.348"/>
<dbReference type="HOGENOM" id="CLU_156536_0_0_11"/>
<dbReference type="Proteomes" id="UP000001020">
    <property type="component" value="Chromosome"/>
</dbReference>
<evidence type="ECO:0000250" key="1"/>
<keyword id="KW-1185">Reference proteome</keyword>
<reference key="1">
    <citation type="journal article" date="2002" name="J. Bacteriol.">
        <title>Whole-genome comparison of Mycobacterium tuberculosis clinical and laboratory strains.</title>
        <authorList>
            <person name="Fleischmann R.D."/>
            <person name="Alland D."/>
            <person name="Eisen J.A."/>
            <person name="Carpenter L."/>
            <person name="White O."/>
            <person name="Peterson J.D."/>
            <person name="DeBoy R.T."/>
            <person name="Dodson R.J."/>
            <person name="Gwinn M.L."/>
            <person name="Haft D.H."/>
            <person name="Hickey E.K."/>
            <person name="Kolonay J.F."/>
            <person name="Nelson W.C."/>
            <person name="Umayam L.A."/>
            <person name="Ermolaeva M.D."/>
            <person name="Salzberg S.L."/>
            <person name="Delcher A."/>
            <person name="Utterback T.R."/>
            <person name="Weidman J.F."/>
            <person name="Khouri H.M."/>
            <person name="Gill J."/>
            <person name="Mikula A."/>
            <person name="Bishai W."/>
            <person name="Jacobs W.R. Jr."/>
            <person name="Venter J.C."/>
            <person name="Fraser C.M."/>
        </authorList>
    </citation>
    <scope>NUCLEOTIDE SEQUENCE [LARGE SCALE GENOMIC DNA]</scope>
    <source>
        <strain>CDC 1551 / Oshkosh</strain>
    </source>
</reference>
<name>Y313_MYCTO</name>
<accession>P9WL02</accession>
<accession>L0T632</accession>
<accession>O07240</accession>
<accession>Q7DA15</accession>
<sequence>MGDYGPFGFDPDEFDRVIREGSEGLRDAFERIGRFLSSSGAGTGWSAIFEDLSRRSRPAPETAGEAGDGVWAIYTVDADGGARVEQVYATELDALRANKDNTDPKRKVRFLPYGIAVSVLDDPVDEAQ</sequence>
<feature type="initiator methionine" description="Removed" evidence="1">
    <location>
        <position position="1"/>
    </location>
</feature>
<feature type="chain" id="PRO_0000427564" description="Uncharacterized protein MT0327">
    <location>
        <begin position="2"/>
        <end position="128"/>
    </location>
</feature>
<proteinExistence type="inferred from homology"/>
<gene>
    <name type="ordered locus">MT0327</name>
</gene>
<protein>
    <recommendedName>
        <fullName>Uncharacterized protein MT0327</fullName>
    </recommendedName>
</protein>